<evidence type="ECO:0000250" key="1"/>
<evidence type="ECO:0000255" key="2"/>
<evidence type="ECO:0000305" key="3"/>
<accession>Q2YZA4</accession>
<organism>
    <name type="scientific">Staphylococcus aureus (strain bovine RF122 / ET3-1)</name>
    <dbReference type="NCBI Taxonomy" id="273036"/>
    <lineage>
        <taxon>Bacteria</taxon>
        <taxon>Bacillati</taxon>
        <taxon>Bacillota</taxon>
        <taxon>Bacilli</taxon>
        <taxon>Bacillales</taxon>
        <taxon>Staphylococcaceae</taxon>
        <taxon>Staphylococcus</taxon>
    </lineage>
</organism>
<reference key="1">
    <citation type="journal article" date="2007" name="PLoS ONE">
        <title>Molecular correlates of host specialization in Staphylococcus aureus.</title>
        <authorList>
            <person name="Herron-Olson L."/>
            <person name="Fitzgerald J.R."/>
            <person name="Musser J.M."/>
            <person name="Kapur V."/>
        </authorList>
    </citation>
    <scope>NUCLEOTIDE SEQUENCE [LARGE SCALE GENOMIC DNA]</scope>
    <source>
        <strain>bovine RF122 / ET3-1</strain>
    </source>
</reference>
<name>DRP35_STAAB</name>
<feature type="chain" id="PRO_0000259745" description="Lactonase drp35">
    <location>
        <begin position="1"/>
        <end position="324"/>
    </location>
</feature>
<feature type="active site" description="Proton donor" evidence="2">
    <location>
        <position position="235"/>
    </location>
</feature>
<feature type="binding site" evidence="1">
    <location>
        <position position="47"/>
    </location>
    <ligand>
        <name>Ca(2+)</name>
        <dbReference type="ChEBI" id="CHEBI:29108"/>
        <label>1</label>
        <note>catalytic</note>
    </ligand>
</feature>
<feature type="binding site" evidence="1">
    <location>
        <position position="109"/>
    </location>
    <ligand>
        <name>Ca(2+)</name>
        <dbReference type="ChEBI" id="CHEBI:29108"/>
        <label>2</label>
    </ligand>
</feature>
<feature type="binding site" evidence="1">
    <location>
        <position position="111"/>
    </location>
    <ligand>
        <name>Ca(2+)</name>
        <dbReference type="ChEBI" id="CHEBI:29108"/>
        <label>2</label>
    </ligand>
</feature>
<feature type="binding site" evidence="1">
    <location>
        <position position="129"/>
    </location>
    <ligand>
        <name>Ca(2+)</name>
        <dbReference type="ChEBI" id="CHEBI:29108"/>
        <label>2</label>
    </ligand>
</feature>
<feature type="binding site" evidence="1">
    <location>
        <position position="132"/>
    </location>
    <ligand>
        <name>Ca(2+)</name>
        <dbReference type="ChEBI" id="CHEBI:29108"/>
        <label>2</label>
    </ligand>
</feature>
<feature type="binding site" evidence="1">
    <location>
        <position position="134"/>
    </location>
    <ligand>
        <name>Ca(2+)</name>
        <dbReference type="ChEBI" id="CHEBI:29108"/>
        <label>2</label>
    </ligand>
</feature>
<feature type="binding site" evidence="1">
    <location>
        <position position="137"/>
    </location>
    <ligand>
        <name>Ca(2+)</name>
        <dbReference type="ChEBI" id="CHEBI:29108"/>
        <label>1</label>
        <note>catalytic</note>
    </ligand>
</feature>
<feature type="binding site" evidence="1">
    <location>
        <position position="184"/>
    </location>
    <ligand>
        <name>Ca(2+)</name>
        <dbReference type="ChEBI" id="CHEBI:29108"/>
        <label>1</label>
        <note>catalytic</note>
    </ligand>
</feature>
<feature type="binding site" evidence="1">
    <location>
        <position position="235"/>
    </location>
    <ligand>
        <name>Ca(2+)</name>
        <dbReference type="ChEBI" id="CHEBI:29108"/>
        <label>1</label>
        <note>catalytic</note>
    </ligand>
</feature>
<feature type="binding site" evidence="1">
    <location>
        <position position="236"/>
    </location>
    <ligand>
        <name>Ca(2+)</name>
        <dbReference type="ChEBI" id="CHEBI:29108"/>
        <label>1</label>
        <note>catalytic</note>
    </ligand>
</feature>
<keyword id="KW-0106">Calcium</keyword>
<keyword id="KW-0963">Cytoplasm</keyword>
<keyword id="KW-0378">Hydrolase</keyword>
<keyword id="KW-0479">Metal-binding</keyword>
<comment type="function">
    <text evidence="1">Exhibits lactonase activity. Acts in cells with perturbed membrane integrity and is possibly related to the membrane homeostasis (By similarity).</text>
</comment>
<comment type="cofactor">
    <cofactor evidence="1">
        <name>Ca(2+)</name>
        <dbReference type="ChEBI" id="CHEBI:29108"/>
    </cofactor>
    <text evidence="1">Binds 2 Ca(2+) ions per subunit.</text>
</comment>
<comment type="subcellular location">
    <subcellularLocation>
        <location evidence="1">Cytoplasm</location>
    </subcellularLocation>
</comment>
<comment type="similarity">
    <text evidence="3">Belongs to the SMP-30/CGR1 family.</text>
</comment>
<gene>
    <name type="primary">drp35</name>
    <name type="ordered locus">SAB2564c</name>
</gene>
<sequence>MMSQQDLPTLFYSGKSNSAVPIISESELQTITAEPWLEISKKGLQLEGLNFDRQGQLFLLDVFEGNIFKVNPETKEIKQPFVSHKANPAAIKIHKDGRLFVCYLGDFKSTGGIFAATENGDNIQDIIEDLSTTYCIDDMVFDSKGGFYFTDFRGYSTNPLGGVYYVAPDFRTVTPIIQNISVANGIALSTDEKVLWVTETTANRLHRIALEDDGVTIQPFGATIPYYFTGHEGPDSCCIDRDDNLYVAMYGQGRVLVFNKRGYPIGQILIPGRDEGHMLRSTHPQFIPGTNQLIICANDIEMGGGSMLYTVNGFAKGHQSFQFQ</sequence>
<proteinExistence type="inferred from homology"/>
<protein>
    <recommendedName>
        <fullName>Lactonase drp35</fullName>
        <ecNumber>3.1.1.-</ecNumber>
    </recommendedName>
</protein>
<dbReference type="EC" id="3.1.1.-"/>
<dbReference type="EMBL" id="AJ938182">
    <property type="protein sequence ID" value="CAI82252.1"/>
    <property type="molecule type" value="Genomic_DNA"/>
</dbReference>
<dbReference type="SMR" id="Q2YZA4"/>
<dbReference type="KEGG" id="sab:SAB2564c"/>
<dbReference type="HOGENOM" id="CLU_036110_2_0_9"/>
<dbReference type="GO" id="GO:0005737">
    <property type="term" value="C:cytoplasm"/>
    <property type="evidence" value="ECO:0007669"/>
    <property type="project" value="UniProtKB-SubCell"/>
</dbReference>
<dbReference type="GO" id="GO:0016787">
    <property type="term" value="F:hydrolase activity"/>
    <property type="evidence" value="ECO:0007669"/>
    <property type="project" value="UniProtKB-KW"/>
</dbReference>
<dbReference type="GO" id="GO:0046872">
    <property type="term" value="F:metal ion binding"/>
    <property type="evidence" value="ECO:0007669"/>
    <property type="project" value="UniProtKB-KW"/>
</dbReference>
<dbReference type="Gene3D" id="2.120.10.30">
    <property type="entry name" value="TolB, C-terminal domain"/>
    <property type="match status" value="1"/>
</dbReference>
<dbReference type="InterPro" id="IPR011042">
    <property type="entry name" value="6-blade_b-propeller_TolB-like"/>
</dbReference>
<dbReference type="InterPro" id="IPR013658">
    <property type="entry name" value="SGL"/>
</dbReference>
<dbReference type="InterPro" id="IPR051262">
    <property type="entry name" value="SMP-30/CGR1_Lactonase"/>
</dbReference>
<dbReference type="PANTHER" id="PTHR47572:SF4">
    <property type="entry name" value="LACTONASE DRP35"/>
    <property type="match status" value="1"/>
</dbReference>
<dbReference type="PANTHER" id="PTHR47572">
    <property type="entry name" value="LIPOPROTEIN-RELATED"/>
    <property type="match status" value="1"/>
</dbReference>
<dbReference type="Pfam" id="PF08450">
    <property type="entry name" value="SGL"/>
    <property type="match status" value="1"/>
</dbReference>
<dbReference type="SUPFAM" id="SSF63829">
    <property type="entry name" value="Calcium-dependent phosphotriesterase"/>
    <property type="match status" value="1"/>
</dbReference>